<dbReference type="EC" id="4.2.3.4" evidence="1"/>
<dbReference type="EMBL" id="CP000227">
    <property type="protein sequence ID" value="ACM12014.1"/>
    <property type="molecule type" value="Genomic_DNA"/>
</dbReference>
<dbReference type="SMR" id="B9IVN9"/>
<dbReference type="KEGG" id="bcq:BCQ_1586"/>
<dbReference type="HOGENOM" id="CLU_001201_0_2_9"/>
<dbReference type="UniPathway" id="UPA00053">
    <property type="reaction ID" value="UER00085"/>
</dbReference>
<dbReference type="Proteomes" id="UP000000441">
    <property type="component" value="Chromosome"/>
</dbReference>
<dbReference type="GO" id="GO:0005737">
    <property type="term" value="C:cytoplasm"/>
    <property type="evidence" value="ECO:0007669"/>
    <property type="project" value="UniProtKB-SubCell"/>
</dbReference>
<dbReference type="GO" id="GO:0003856">
    <property type="term" value="F:3-dehydroquinate synthase activity"/>
    <property type="evidence" value="ECO:0007669"/>
    <property type="project" value="UniProtKB-UniRule"/>
</dbReference>
<dbReference type="GO" id="GO:0046872">
    <property type="term" value="F:metal ion binding"/>
    <property type="evidence" value="ECO:0007669"/>
    <property type="project" value="UniProtKB-KW"/>
</dbReference>
<dbReference type="GO" id="GO:0000166">
    <property type="term" value="F:nucleotide binding"/>
    <property type="evidence" value="ECO:0007669"/>
    <property type="project" value="UniProtKB-KW"/>
</dbReference>
<dbReference type="GO" id="GO:0008652">
    <property type="term" value="P:amino acid biosynthetic process"/>
    <property type="evidence" value="ECO:0007669"/>
    <property type="project" value="UniProtKB-KW"/>
</dbReference>
<dbReference type="GO" id="GO:0009073">
    <property type="term" value="P:aromatic amino acid family biosynthetic process"/>
    <property type="evidence" value="ECO:0007669"/>
    <property type="project" value="UniProtKB-KW"/>
</dbReference>
<dbReference type="GO" id="GO:0009423">
    <property type="term" value="P:chorismate biosynthetic process"/>
    <property type="evidence" value="ECO:0007669"/>
    <property type="project" value="UniProtKB-UniRule"/>
</dbReference>
<dbReference type="CDD" id="cd08195">
    <property type="entry name" value="DHQS"/>
    <property type="match status" value="1"/>
</dbReference>
<dbReference type="FunFam" id="1.20.1090.10:FF:000008">
    <property type="entry name" value="3-dehydroquinate synthase"/>
    <property type="match status" value="1"/>
</dbReference>
<dbReference type="FunFam" id="3.40.50.1970:FF:000001">
    <property type="entry name" value="3-dehydroquinate synthase"/>
    <property type="match status" value="1"/>
</dbReference>
<dbReference type="Gene3D" id="3.40.50.1970">
    <property type="match status" value="1"/>
</dbReference>
<dbReference type="Gene3D" id="1.20.1090.10">
    <property type="entry name" value="Dehydroquinate synthase-like - alpha domain"/>
    <property type="match status" value="1"/>
</dbReference>
<dbReference type="HAMAP" id="MF_00110">
    <property type="entry name" value="DHQ_synthase"/>
    <property type="match status" value="1"/>
</dbReference>
<dbReference type="InterPro" id="IPR050071">
    <property type="entry name" value="Dehydroquinate_synthase"/>
</dbReference>
<dbReference type="InterPro" id="IPR016037">
    <property type="entry name" value="DHQ_synth_AroB"/>
</dbReference>
<dbReference type="InterPro" id="IPR030963">
    <property type="entry name" value="DHQ_synth_fam"/>
</dbReference>
<dbReference type="InterPro" id="IPR030960">
    <property type="entry name" value="DHQS/DOIS_N"/>
</dbReference>
<dbReference type="InterPro" id="IPR056179">
    <property type="entry name" value="DHQS_C"/>
</dbReference>
<dbReference type="NCBIfam" id="TIGR01357">
    <property type="entry name" value="aroB"/>
    <property type="match status" value="1"/>
</dbReference>
<dbReference type="PANTHER" id="PTHR43622">
    <property type="entry name" value="3-DEHYDROQUINATE SYNTHASE"/>
    <property type="match status" value="1"/>
</dbReference>
<dbReference type="PANTHER" id="PTHR43622:SF7">
    <property type="entry name" value="3-DEHYDROQUINATE SYNTHASE, CHLOROPLASTIC"/>
    <property type="match status" value="1"/>
</dbReference>
<dbReference type="Pfam" id="PF01761">
    <property type="entry name" value="DHQ_synthase"/>
    <property type="match status" value="1"/>
</dbReference>
<dbReference type="Pfam" id="PF24621">
    <property type="entry name" value="DHQS_C"/>
    <property type="match status" value="1"/>
</dbReference>
<dbReference type="PIRSF" id="PIRSF001455">
    <property type="entry name" value="DHQ_synth"/>
    <property type="match status" value="1"/>
</dbReference>
<dbReference type="SUPFAM" id="SSF56796">
    <property type="entry name" value="Dehydroquinate synthase-like"/>
    <property type="match status" value="1"/>
</dbReference>
<reference key="1">
    <citation type="journal article" date="2009" name="J. Bacteriol.">
        <title>Complete genome sequence of the extremophilic Bacillus cereus strain Q1 with industrial applications.</title>
        <authorList>
            <person name="Xiong Z."/>
            <person name="Jiang Y."/>
            <person name="Qi D."/>
            <person name="Lu H."/>
            <person name="Yang F."/>
            <person name="Yang J."/>
            <person name="Chen L."/>
            <person name="Sun L."/>
            <person name="Xu X."/>
            <person name="Xue Y."/>
            <person name="Zhu Y."/>
            <person name="Jin Q."/>
        </authorList>
    </citation>
    <scope>NUCLEOTIDE SEQUENCE [LARGE SCALE GENOMIC DNA]</scope>
    <source>
        <strain>Q1</strain>
    </source>
</reference>
<keyword id="KW-0028">Amino-acid biosynthesis</keyword>
<keyword id="KW-0057">Aromatic amino acid biosynthesis</keyword>
<keyword id="KW-0170">Cobalt</keyword>
<keyword id="KW-0963">Cytoplasm</keyword>
<keyword id="KW-0456">Lyase</keyword>
<keyword id="KW-0479">Metal-binding</keyword>
<keyword id="KW-0520">NAD</keyword>
<keyword id="KW-0547">Nucleotide-binding</keyword>
<keyword id="KW-0862">Zinc</keyword>
<sequence length="365" mass="40546">MENIHIQTKSKEYDVHVGKESLSHLTTIVQNMQPSVSNIMIISDEAVAPLHLQTVVDALQIDQKVFSFVVPSGEKEKSFENFYAAHTSALENKLDRNSLIIALGGGMIGDLAGFVAASFMRGIRFVQVPTTLLAHDSAVGGKVAINHPLGKNMIGAFHQPEAVVYHTPFLQSLPEKEWRSGYAEVIKHALIGDVKLYHWLKEEVQTLADLRDEKLIHILTKAIPVKANIVAQDETEKGVRAHLNFGHTLGHALEKELGYGNITHGDGVAVGMLFAIFLSEQVYKVNLAYEEMKQWFLKYGYPKMPSDLSVERLVGLMKQDKKANAGTIHMVLMQEYGVVNVVSIPDETVHIALEAFQKDMGIRSR</sequence>
<organism>
    <name type="scientific">Bacillus cereus (strain Q1)</name>
    <dbReference type="NCBI Taxonomy" id="361100"/>
    <lineage>
        <taxon>Bacteria</taxon>
        <taxon>Bacillati</taxon>
        <taxon>Bacillota</taxon>
        <taxon>Bacilli</taxon>
        <taxon>Bacillales</taxon>
        <taxon>Bacillaceae</taxon>
        <taxon>Bacillus</taxon>
        <taxon>Bacillus cereus group</taxon>
    </lineage>
</organism>
<gene>
    <name evidence="1" type="primary">aroB</name>
    <name type="ordered locus">BCQ_1586</name>
</gene>
<accession>B9IVN9</accession>
<proteinExistence type="inferred from homology"/>
<feature type="chain" id="PRO_1000119074" description="3-dehydroquinate synthase">
    <location>
        <begin position="1"/>
        <end position="365"/>
    </location>
</feature>
<feature type="binding site" evidence="1">
    <location>
        <begin position="72"/>
        <end position="77"/>
    </location>
    <ligand>
        <name>NAD(+)</name>
        <dbReference type="ChEBI" id="CHEBI:57540"/>
    </ligand>
</feature>
<feature type="binding site" evidence="1">
    <location>
        <begin position="130"/>
        <end position="131"/>
    </location>
    <ligand>
        <name>NAD(+)</name>
        <dbReference type="ChEBI" id="CHEBI:57540"/>
    </ligand>
</feature>
<feature type="binding site" evidence="1">
    <location>
        <position position="142"/>
    </location>
    <ligand>
        <name>NAD(+)</name>
        <dbReference type="ChEBI" id="CHEBI:57540"/>
    </ligand>
</feature>
<feature type="binding site" evidence="1">
    <location>
        <position position="151"/>
    </location>
    <ligand>
        <name>NAD(+)</name>
        <dbReference type="ChEBI" id="CHEBI:57540"/>
    </ligand>
</feature>
<feature type="binding site" evidence="1">
    <location>
        <position position="184"/>
    </location>
    <ligand>
        <name>Zn(2+)</name>
        <dbReference type="ChEBI" id="CHEBI:29105"/>
    </ligand>
</feature>
<feature type="binding site" evidence="1">
    <location>
        <position position="247"/>
    </location>
    <ligand>
        <name>Zn(2+)</name>
        <dbReference type="ChEBI" id="CHEBI:29105"/>
    </ligand>
</feature>
<feature type="binding site" evidence="1">
    <location>
        <position position="264"/>
    </location>
    <ligand>
        <name>Zn(2+)</name>
        <dbReference type="ChEBI" id="CHEBI:29105"/>
    </ligand>
</feature>
<evidence type="ECO:0000255" key="1">
    <source>
        <dbReference type="HAMAP-Rule" id="MF_00110"/>
    </source>
</evidence>
<protein>
    <recommendedName>
        <fullName evidence="1">3-dehydroquinate synthase</fullName>
        <shortName evidence="1">DHQS</shortName>
        <ecNumber evidence="1">4.2.3.4</ecNumber>
    </recommendedName>
</protein>
<name>AROB_BACCQ</name>
<comment type="function">
    <text evidence="1">Catalyzes the conversion of 3-deoxy-D-arabino-heptulosonate 7-phosphate (DAHP) to dehydroquinate (DHQ).</text>
</comment>
<comment type="catalytic activity">
    <reaction evidence="1">
        <text>7-phospho-2-dehydro-3-deoxy-D-arabino-heptonate = 3-dehydroquinate + phosphate</text>
        <dbReference type="Rhea" id="RHEA:21968"/>
        <dbReference type="ChEBI" id="CHEBI:32364"/>
        <dbReference type="ChEBI" id="CHEBI:43474"/>
        <dbReference type="ChEBI" id="CHEBI:58394"/>
        <dbReference type="EC" id="4.2.3.4"/>
    </reaction>
</comment>
<comment type="cofactor">
    <cofactor evidence="1">
        <name>Co(2+)</name>
        <dbReference type="ChEBI" id="CHEBI:48828"/>
    </cofactor>
    <cofactor evidence="1">
        <name>Zn(2+)</name>
        <dbReference type="ChEBI" id="CHEBI:29105"/>
    </cofactor>
    <text evidence="1">Binds 1 divalent metal cation per subunit. Can use either Co(2+) or Zn(2+).</text>
</comment>
<comment type="cofactor">
    <cofactor evidence="1">
        <name>NAD(+)</name>
        <dbReference type="ChEBI" id="CHEBI:57540"/>
    </cofactor>
</comment>
<comment type="pathway">
    <text evidence="1">Metabolic intermediate biosynthesis; chorismate biosynthesis; chorismate from D-erythrose 4-phosphate and phosphoenolpyruvate: step 2/7.</text>
</comment>
<comment type="subcellular location">
    <subcellularLocation>
        <location evidence="1">Cytoplasm</location>
    </subcellularLocation>
</comment>
<comment type="similarity">
    <text evidence="1">Belongs to the sugar phosphate cyclases superfamily. Dehydroquinate synthase family.</text>
</comment>